<accession>C6A117</accession>
<keyword id="KW-0963">Cytoplasm</keyword>
<keyword id="KW-0385">Hypusine</keyword>
<keyword id="KW-0396">Initiation factor</keyword>
<keyword id="KW-0648">Protein biosynthesis</keyword>
<keyword id="KW-1185">Reference proteome</keyword>
<evidence type="ECO:0000255" key="1">
    <source>
        <dbReference type="HAMAP-Rule" id="MF_00085"/>
    </source>
</evidence>
<reference key="1">
    <citation type="journal article" date="2009" name="Appl. Environ. Microbiol.">
        <title>Metabolic versatility and indigenous origin of the archaeon Thermococcus sibiricus, isolated from a siberian oil reservoir, as revealed by genome analysis.</title>
        <authorList>
            <person name="Mardanov A.V."/>
            <person name="Ravin N.V."/>
            <person name="Svetlitchnyi V.A."/>
            <person name="Beletsky A.V."/>
            <person name="Miroshnichenko M.L."/>
            <person name="Bonch-Osmolovskaya E.A."/>
            <person name="Skryabin K.G."/>
        </authorList>
    </citation>
    <scope>NUCLEOTIDE SEQUENCE [LARGE SCALE GENOMIC DNA]</scope>
    <source>
        <strain>DSM 12597 / MM 739</strain>
    </source>
</reference>
<feature type="chain" id="PRO_1000202610" description="Translation initiation factor 5A">
    <location>
        <begin position="1"/>
        <end position="138"/>
    </location>
</feature>
<feature type="modified residue" description="Hypusine" evidence="1">
    <location>
        <position position="37"/>
    </location>
</feature>
<protein>
    <recommendedName>
        <fullName evidence="1">Translation initiation factor 5A</fullName>
    </recommendedName>
    <alternativeName>
        <fullName evidence="1">Hypusine-containing protein</fullName>
    </alternativeName>
    <alternativeName>
        <fullName evidence="1">eIF-5A</fullName>
    </alternativeName>
</protein>
<comment type="function">
    <text evidence="1">Functions by promoting the formation of the first peptide bond.</text>
</comment>
<comment type="subcellular location">
    <subcellularLocation>
        <location evidence="1">Cytoplasm</location>
    </subcellularLocation>
</comment>
<comment type="similarity">
    <text evidence="1">Belongs to the eIF-5A family.</text>
</comment>
<dbReference type="EMBL" id="CP001463">
    <property type="protein sequence ID" value="ACS89312.1"/>
    <property type="molecule type" value="Genomic_DNA"/>
</dbReference>
<dbReference type="RefSeq" id="WP_012766273.1">
    <property type="nucleotide sequence ID" value="NC_012883.1"/>
</dbReference>
<dbReference type="SMR" id="C6A117"/>
<dbReference type="STRING" id="604354.TSIB_0245"/>
<dbReference type="GeneID" id="8095218"/>
<dbReference type="KEGG" id="tsi:TSIB_0245"/>
<dbReference type="eggNOG" id="arCOG04277">
    <property type="taxonomic scope" value="Archaea"/>
</dbReference>
<dbReference type="HOGENOM" id="CLU_102600_3_0_2"/>
<dbReference type="OrthoDB" id="23689at2157"/>
<dbReference type="Proteomes" id="UP000009079">
    <property type="component" value="Chromosome"/>
</dbReference>
<dbReference type="GO" id="GO:0005737">
    <property type="term" value="C:cytoplasm"/>
    <property type="evidence" value="ECO:0007669"/>
    <property type="project" value="UniProtKB-SubCell"/>
</dbReference>
<dbReference type="GO" id="GO:0043022">
    <property type="term" value="F:ribosome binding"/>
    <property type="evidence" value="ECO:0007669"/>
    <property type="project" value="InterPro"/>
</dbReference>
<dbReference type="GO" id="GO:0003723">
    <property type="term" value="F:RNA binding"/>
    <property type="evidence" value="ECO:0007669"/>
    <property type="project" value="InterPro"/>
</dbReference>
<dbReference type="GO" id="GO:0003746">
    <property type="term" value="F:translation elongation factor activity"/>
    <property type="evidence" value="ECO:0007669"/>
    <property type="project" value="InterPro"/>
</dbReference>
<dbReference type="GO" id="GO:0003743">
    <property type="term" value="F:translation initiation factor activity"/>
    <property type="evidence" value="ECO:0007669"/>
    <property type="project" value="UniProtKB-UniRule"/>
</dbReference>
<dbReference type="GO" id="GO:0045901">
    <property type="term" value="P:positive regulation of translational elongation"/>
    <property type="evidence" value="ECO:0007669"/>
    <property type="project" value="InterPro"/>
</dbReference>
<dbReference type="GO" id="GO:0045905">
    <property type="term" value="P:positive regulation of translational termination"/>
    <property type="evidence" value="ECO:0007669"/>
    <property type="project" value="InterPro"/>
</dbReference>
<dbReference type="CDD" id="cd04467">
    <property type="entry name" value="S1_aIF5A"/>
    <property type="match status" value="1"/>
</dbReference>
<dbReference type="FunFam" id="2.30.30.30:FF:000038">
    <property type="entry name" value="Translation initiation factor 5A"/>
    <property type="match status" value="1"/>
</dbReference>
<dbReference type="FunFam" id="2.40.50.140:FF:000334">
    <property type="entry name" value="Translation initiation factor 5A"/>
    <property type="match status" value="1"/>
</dbReference>
<dbReference type="Gene3D" id="2.30.30.30">
    <property type="match status" value="1"/>
</dbReference>
<dbReference type="Gene3D" id="2.40.50.140">
    <property type="entry name" value="Nucleic acid-binding proteins"/>
    <property type="match status" value="1"/>
</dbReference>
<dbReference type="HAMAP" id="MF_00085">
    <property type="entry name" value="eIF_5A"/>
    <property type="match status" value="1"/>
</dbReference>
<dbReference type="InterPro" id="IPR001884">
    <property type="entry name" value="IF5A-like"/>
</dbReference>
<dbReference type="InterPro" id="IPR048670">
    <property type="entry name" value="IF5A-like_N"/>
</dbReference>
<dbReference type="InterPro" id="IPR012340">
    <property type="entry name" value="NA-bd_OB-fold"/>
</dbReference>
<dbReference type="InterPro" id="IPR014722">
    <property type="entry name" value="Rib_uL2_dom2"/>
</dbReference>
<dbReference type="InterPro" id="IPR019769">
    <property type="entry name" value="Trans_elong_IF5A_hypusine_site"/>
</dbReference>
<dbReference type="InterPro" id="IPR022847">
    <property type="entry name" value="Transl_elong_IF5A_arc"/>
</dbReference>
<dbReference type="InterPro" id="IPR020189">
    <property type="entry name" value="Transl_elong_IF5A_C"/>
</dbReference>
<dbReference type="InterPro" id="IPR008991">
    <property type="entry name" value="Translation_prot_SH3-like_sf"/>
</dbReference>
<dbReference type="NCBIfam" id="TIGR00037">
    <property type="entry name" value="eIF_5A"/>
    <property type="match status" value="1"/>
</dbReference>
<dbReference type="NCBIfam" id="NF003076">
    <property type="entry name" value="PRK03999.1"/>
    <property type="match status" value="1"/>
</dbReference>
<dbReference type="PANTHER" id="PTHR11673">
    <property type="entry name" value="TRANSLATION INITIATION FACTOR 5A FAMILY MEMBER"/>
    <property type="match status" value="1"/>
</dbReference>
<dbReference type="Pfam" id="PF01287">
    <property type="entry name" value="eIF-5a"/>
    <property type="match status" value="1"/>
</dbReference>
<dbReference type="Pfam" id="PF21485">
    <property type="entry name" value="IF5A-like_N"/>
    <property type="match status" value="1"/>
</dbReference>
<dbReference type="PIRSF" id="PIRSF003025">
    <property type="entry name" value="eIF5A"/>
    <property type="match status" value="1"/>
</dbReference>
<dbReference type="SMART" id="SM01376">
    <property type="entry name" value="eIF-5a"/>
    <property type="match status" value="1"/>
</dbReference>
<dbReference type="SUPFAM" id="SSF50249">
    <property type="entry name" value="Nucleic acid-binding proteins"/>
    <property type="match status" value="1"/>
</dbReference>
<dbReference type="SUPFAM" id="SSF50104">
    <property type="entry name" value="Translation proteins SH3-like domain"/>
    <property type="match status" value="1"/>
</dbReference>
<dbReference type="PROSITE" id="PS00302">
    <property type="entry name" value="IF5A_HYPUSINE"/>
    <property type="match status" value="1"/>
</dbReference>
<organism>
    <name type="scientific">Thermococcus sibiricus (strain DSM 12597 / MM 739)</name>
    <dbReference type="NCBI Taxonomy" id="604354"/>
    <lineage>
        <taxon>Archaea</taxon>
        <taxon>Methanobacteriati</taxon>
        <taxon>Methanobacteriota</taxon>
        <taxon>Thermococci</taxon>
        <taxon>Thermococcales</taxon>
        <taxon>Thermococcaceae</taxon>
        <taxon>Thermococcus</taxon>
    </lineage>
</organism>
<name>IF5A_THESM</name>
<sequence length="138" mass="15214">MGDKTRVQVSKLKPGRYILIDDEPCRIANITVSSPGKHGSAKARIEAVGIFDGKVRSIVKPTSAEVDVPIIDKKTGQIIAITPDTVQLMDMETYDLFDVPIATGVNEEIKDKLKEGINVEYWETLGRIKIMKLKGESS</sequence>
<gene>
    <name type="primary">eIF5A</name>
    <name type="ordered locus">TSIB_0245</name>
</gene>
<proteinExistence type="inferred from homology"/>